<gene>
    <name evidence="1" type="primary">rpsP</name>
    <name type="ordered locus">Mrad2831_3616</name>
</gene>
<keyword id="KW-0687">Ribonucleoprotein</keyword>
<keyword id="KW-0689">Ribosomal protein</keyword>
<proteinExistence type="inferred from homology"/>
<protein>
    <recommendedName>
        <fullName evidence="1">Small ribosomal subunit protein bS16</fullName>
    </recommendedName>
    <alternativeName>
        <fullName evidence="3">30S ribosomal protein S16</fullName>
    </alternativeName>
</protein>
<dbReference type="EMBL" id="CP001001">
    <property type="protein sequence ID" value="ACB25592.1"/>
    <property type="molecule type" value="Genomic_DNA"/>
</dbReference>
<dbReference type="RefSeq" id="WP_012320553.1">
    <property type="nucleotide sequence ID" value="NC_010505.1"/>
</dbReference>
<dbReference type="SMR" id="B1LVU2"/>
<dbReference type="STRING" id="426355.Mrad2831_3616"/>
<dbReference type="GeneID" id="6139669"/>
<dbReference type="KEGG" id="mrd:Mrad2831_3616"/>
<dbReference type="eggNOG" id="COG0228">
    <property type="taxonomic scope" value="Bacteria"/>
</dbReference>
<dbReference type="HOGENOM" id="CLU_100590_3_1_5"/>
<dbReference type="OrthoDB" id="9807878at2"/>
<dbReference type="Proteomes" id="UP000006589">
    <property type="component" value="Chromosome"/>
</dbReference>
<dbReference type="GO" id="GO:0005737">
    <property type="term" value="C:cytoplasm"/>
    <property type="evidence" value="ECO:0007669"/>
    <property type="project" value="UniProtKB-ARBA"/>
</dbReference>
<dbReference type="GO" id="GO:0015935">
    <property type="term" value="C:small ribosomal subunit"/>
    <property type="evidence" value="ECO:0007669"/>
    <property type="project" value="TreeGrafter"/>
</dbReference>
<dbReference type="GO" id="GO:0003735">
    <property type="term" value="F:structural constituent of ribosome"/>
    <property type="evidence" value="ECO:0007669"/>
    <property type="project" value="InterPro"/>
</dbReference>
<dbReference type="GO" id="GO:0006412">
    <property type="term" value="P:translation"/>
    <property type="evidence" value="ECO:0007669"/>
    <property type="project" value="UniProtKB-UniRule"/>
</dbReference>
<dbReference type="Gene3D" id="3.30.1320.10">
    <property type="match status" value="1"/>
</dbReference>
<dbReference type="HAMAP" id="MF_00385">
    <property type="entry name" value="Ribosomal_bS16"/>
    <property type="match status" value="1"/>
</dbReference>
<dbReference type="InterPro" id="IPR000307">
    <property type="entry name" value="Ribosomal_bS16"/>
</dbReference>
<dbReference type="InterPro" id="IPR020592">
    <property type="entry name" value="Ribosomal_bS16_CS"/>
</dbReference>
<dbReference type="InterPro" id="IPR023803">
    <property type="entry name" value="Ribosomal_bS16_dom_sf"/>
</dbReference>
<dbReference type="NCBIfam" id="TIGR00002">
    <property type="entry name" value="S16"/>
    <property type="match status" value="1"/>
</dbReference>
<dbReference type="PANTHER" id="PTHR12919">
    <property type="entry name" value="30S RIBOSOMAL PROTEIN S16"/>
    <property type="match status" value="1"/>
</dbReference>
<dbReference type="PANTHER" id="PTHR12919:SF20">
    <property type="entry name" value="SMALL RIBOSOMAL SUBUNIT PROTEIN BS16M"/>
    <property type="match status" value="1"/>
</dbReference>
<dbReference type="Pfam" id="PF00886">
    <property type="entry name" value="Ribosomal_S16"/>
    <property type="match status" value="1"/>
</dbReference>
<dbReference type="SUPFAM" id="SSF54565">
    <property type="entry name" value="Ribosomal protein S16"/>
    <property type="match status" value="1"/>
</dbReference>
<dbReference type="PROSITE" id="PS00732">
    <property type="entry name" value="RIBOSOMAL_S16"/>
    <property type="match status" value="1"/>
</dbReference>
<organism>
    <name type="scientific">Methylobacterium radiotolerans (strain ATCC 27329 / DSM 1819 / JCM 2831 / NBRC 15690 / NCIMB 10815 / 0-1)</name>
    <dbReference type="NCBI Taxonomy" id="426355"/>
    <lineage>
        <taxon>Bacteria</taxon>
        <taxon>Pseudomonadati</taxon>
        <taxon>Pseudomonadota</taxon>
        <taxon>Alphaproteobacteria</taxon>
        <taxon>Hyphomicrobiales</taxon>
        <taxon>Methylobacteriaceae</taxon>
        <taxon>Methylobacterium</taxon>
    </lineage>
</organism>
<sequence length="120" mass="13205">MALKIRLTRGGAKKRPYYRIVVADARAPRDGRFIDKVGAYDPMKAKDDPARIVLDNEKIQSWLAKGAQPTDRVLRFLDQAGLAKRPARNNPQKAEPGEKAKERAAKRAEKAAAPAEDAAA</sequence>
<accession>B1LVU2</accession>
<reference key="1">
    <citation type="submission" date="2008-03" db="EMBL/GenBank/DDBJ databases">
        <title>Complete sequence of chromosome of Methylobacterium radiotolerans JCM 2831.</title>
        <authorList>
            <consortium name="US DOE Joint Genome Institute"/>
            <person name="Copeland A."/>
            <person name="Lucas S."/>
            <person name="Lapidus A."/>
            <person name="Glavina del Rio T."/>
            <person name="Dalin E."/>
            <person name="Tice H."/>
            <person name="Bruce D."/>
            <person name="Goodwin L."/>
            <person name="Pitluck S."/>
            <person name="Kiss H."/>
            <person name="Brettin T."/>
            <person name="Detter J.C."/>
            <person name="Han C."/>
            <person name="Kuske C.R."/>
            <person name="Schmutz J."/>
            <person name="Larimer F."/>
            <person name="Land M."/>
            <person name="Hauser L."/>
            <person name="Kyrpides N."/>
            <person name="Mikhailova N."/>
            <person name="Marx C.J."/>
            <person name="Richardson P."/>
        </authorList>
    </citation>
    <scope>NUCLEOTIDE SEQUENCE [LARGE SCALE GENOMIC DNA]</scope>
    <source>
        <strain>ATCC 27329 / DSM 1819 / JCM 2831 / NBRC 15690 / NCIMB 10815 / 0-1</strain>
    </source>
</reference>
<name>RS16_METRJ</name>
<evidence type="ECO:0000255" key="1">
    <source>
        <dbReference type="HAMAP-Rule" id="MF_00385"/>
    </source>
</evidence>
<evidence type="ECO:0000256" key="2">
    <source>
        <dbReference type="SAM" id="MobiDB-lite"/>
    </source>
</evidence>
<evidence type="ECO:0000305" key="3"/>
<comment type="similarity">
    <text evidence="1">Belongs to the bacterial ribosomal protein bS16 family.</text>
</comment>
<feature type="chain" id="PRO_1000196435" description="Small ribosomal subunit protein bS16">
    <location>
        <begin position="1"/>
        <end position="120"/>
    </location>
</feature>
<feature type="region of interest" description="Disordered" evidence="2">
    <location>
        <begin position="81"/>
        <end position="120"/>
    </location>
</feature>
<feature type="compositionally biased region" description="Basic and acidic residues" evidence="2">
    <location>
        <begin position="95"/>
        <end position="110"/>
    </location>
</feature>
<feature type="compositionally biased region" description="Low complexity" evidence="2">
    <location>
        <begin position="111"/>
        <end position="120"/>
    </location>
</feature>